<proteinExistence type="evidence at transcript level"/>
<sequence>MNLLNMQPKRSEQPAMFEENRASSQEGQDLEVMYKKLHQLQARLSRSVLSEAIKEFEENLRCLFHEAKLLLCSTRTKYRQSWFGSSNEFGSSDERRIIKTSCCIIESTNTILNFLSFLEKNRGLPFGGDQRLQQAAYKGQQFAFRLLRSLTLHKAAQEVPGKDFGLVYGKDVYVLNGHILHRSKQEIVGQAGGRNWHVDHTLHPLRRVPGTPWHKFFGNLEVGDDKQLRLFDDDAAVDSYRVGPQKFFVVIPETAEFILDEVSSEHQRVATIHTENGHVQPPAPTSIQQEALLRKLDFAMTTSLPGYVVEGQPEIVFHHEGLRQIPVDYSQERPLSILSHVFTRPALWGEGLELADHFDPRDGVQQEEHIYYI</sequence>
<protein>
    <recommendedName>
        <fullName>Mating-type protein A-2</fullName>
        <shortName>Mt A-2</shortName>
    </recommendedName>
</protein>
<evidence type="ECO:0000256" key="1">
    <source>
        <dbReference type="SAM" id="MobiDB-lite"/>
    </source>
</evidence>
<evidence type="ECO:0000269" key="2">
    <source>
    </source>
</evidence>
<evidence type="ECO:0000269" key="3">
    <source>
    </source>
</evidence>
<evidence type="ECO:0000305" key="4"/>
<accession>Q10115</accession>
<accession>Q7SE99</accession>
<dbReference type="EMBL" id="M33876">
    <property type="protein sequence ID" value="AAC37477.1"/>
    <property type="status" value="ALT_FRAME"/>
    <property type="molecule type" value="Genomic_DNA"/>
</dbReference>
<dbReference type="EMBL" id="CM002236">
    <property type="protein sequence ID" value="EAA35087.3"/>
    <property type="status" value="ALT_INIT"/>
    <property type="molecule type" value="Genomic_DNA"/>
</dbReference>
<dbReference type="PIR" id="S65583">
    <property type="entry name" value="S65583"/>
</dbReference>
<dbReference type="RefSeq" id="XP_964323.3">
    <property type="nucleotide sequence ID" value="XM_959230.3"/>
</dbReference>
<dbReference type="STRING" id="367110.Q10115"/>
<dbReference type="PaxDb" id="5141-EFNCRP00000001033"/>
<dbReference type="EnsemblFungi" id="EAA35087">
    <property type="protein sequence ID" value="EAA35087"/>
    <property type="gene ID" value="NCU01959"/>
</dbReference>
<dbReference type="GeneID" id="3880488"/>
<dbReference type="KEGG" id="ncr:NCU01959"/>
<dbReference type="HOGENOM" id="CLU_771993_0_0_1"/>
<dbReference type="InParanoid" id="Q10115"/>
<dbReference type="OrthoDB" id="4565977at2759"/>
<dbReference type="Proteomes" id="UP000001805">
    <property type="component" value="Chromosome 1, Linkage Group I"/>
</dbReference>
<dbReference type="InterPro" id="IPR031472">
    <property type="entry name" value="MAT1-1-2/MatA-2/Smr1"/>
</dbReference>
<dbReference type="Pfam" id="PF17043">
    <property type="entry name" value="MAT1-1-2"/>
    <property type="match status" value="1"/>
</dbReference>
<keyword id="KW-1185">Reference proteome</keyword>
<gene>
    <name type="primary">matA-2</name>
    <name type="synonym">mtA-2</name>
    <name type="ORF">NCU01959</name>
</gene>
<reference key="1">
    <citation type="journal article" date="1996" name="Mol. Gen. Genet.">
        <title>Transcriptional analysis of the mtA idiomorph of Neurospora crassa identifies two genes in addition to mtA-1.</title>
        <authorList>
            <person name="Ferreira A.V.-B."/>
            <person name="Saupe S."/>
            <person name="Glass N.L."/>
        </authorList>
    </citation>
    <scope>NUCLEOTIDE SEQUENCE [GENOMIC DNA]</scope>
    <scope>DEVELOPMENTAL STAGE</scope>
    <source>
        <strain>ATCC 24698 / 74-OR23-1A / CBS 708.71 / DSM 1257 / FGSC 987</strain>
    </source>
</reference>
<reference key="2">
    <citation type="journal article" date="2003" name="Nature">
        <title>The genome sequence of the filamentous fungus Neurospora crassa.</title>
        <authorList>
            <person name="Galagan J.E."/>
            <person name="Calvo S.E."/>
            <person name="Borkovich K.A."/>
            <person name="Selker E.U."/>
            <person name="Read N.D."/>
            <person name="Jaffe D.B."/>
            <person name="FitzHugh W."/>
            <person name="Ma L.-J."/>
            <person name="Smirnov S."/>
            <person name="Purcell S."/>
            <person name="Rehman B."/>
            <person name="Elkins T."/>
            <person name="Engels R."/>
            <person name="Wang S."/>
            <person name="Nielsen C.B."/>
            <person name="Butler J."/>
            <person name="Endrizzi M."/>
            <person name="Qui D."/>
            <person name="Ianakiev P."/>
            <person name="Bell-Pedersen D."/>
            <person name="Nelson M.A."/>
            <person name="Werner-Washburne M."/>
            <person name="Selitrennikoff C.P."/>
            <person name="Kinsey J.A."/>
            <person name="Braun E.L."/>
            <person name="Zelter A."/>
            <person name="Schulte U."/>
            <person name="Kothe G.O."/>
            <person name="Jedd G."/>
            <person name="Mewes H.-W."/>
            <person name="Staben C."/>
            <person name="Marcotte E."/>
            <person name="Greenberg D."/>
            <person name="Roy A."/>
            <person name="Foley K."/>
            <person name="Naylor J."/>
            <person name="Stange-Thomann N."/>
            <person name="Barrett R."/>
            <person name="Gnerre S."/>
            <person name="Kamal M."/>
            <person name="Kamvysselis M."/>
            <person name="Mauceli E.W."/>
            <person name="Bielke C."/>
            <person name="Rudd S."/>
            <person name="Frishman D."/>
            <person name="Krystofova S."/>
            <person name="Rasmussen C."/>
            <person name="Metzenberg R.L."/>
            <person name="Perkins D.D."/>
            <person name="Kroken S."/>
            <person name="Cogoni C."/>
            <person name="Macino G."/>
            <person name="Catcheside D.E.A."/>
            <person name="Li W."/>
            <person name="Pratt R.J."/>
            <person name="Osmani S.A."/>
            <person name="DeSouza C.P.C."/>
            <person name="Glass N.L."/>
            <person name="Orbach M.J."/>
            <person name="Berglund J.A."/>
            <person name="Voelker R."/>
            <person name="Yarden O."/>
            <person name="Plamann M."/>
            <person name="Seiler S."/>
            <person name="Dunlap J.C."/>
            <person name="Radford A."/>
            <person name="Aramayo R."/>
            <person name="Natvig D.O."/>
            <person name="Alex L.A."/>
            <person name="Mannhaupt G."/>
            <person name="Ebbole D.J."/>
            <person name="Freitag M."/>
            <person name="Paulsen I."/>
            <person name="Sachs M.S."/>
            <person name="Lander E.S."/>
            <person name="Nusbaum C."/>
            <person name="Birren B.W."/>
        </authorList>
    </citation>
    <scope>NUCLEOTIDE SEQUENCE [LARGE SCALE GENOMIC DNA]</scope>
    <source>
        <strain>ATCC 24698 / 74-OR23-1A / CBS 708.71 / DSM 1257 / FGSC 987</strain>
    </source>
</reference>
<reference key="3">
    <citation type="journal article" date="1998" name="Genetics">
        <title>Characterization of mat A-2, mat A-3 and deltamatA mating-type mutants of Neurospora crassa.</title>
        <authorList>
            <person name="Ferreira A.V.-B."/>
            <person name="An Z."/>
            <person name="Metzenberg R.L."/>
            <person name="Glass N.L."/>
        </authorList>
    </citation>
    <scope>FUNCTION</scope>
</reference>
<feature type="chain" id="PRO_0000096245" description="Mating-type protein A-2">
    <location>
        <begin position="1"/>
        <end position="373"/>
    </location>
</feature>
<feature type="region of interest" description="Disordered" evidence="1">
    <location>
        <begin position="1"/>
        <end position="22"/>
    </location>
</feature>
<feature type="sequence conflict" description="In Ref. 1; AAC37477." evidence="4" ref="1">
    <original>F</original>
    <variation>N</variation>
    <location>
        <position position="56"/>
    </location>
</feature>
<feature type="sequence conflict" description="In Ref. 1; AAC37477." evidence="4" ref="1">
    <original>H</original>
    <variation>Y</variation>
    <location>
        <position position="319"/>
    </location>
</feature>
<organism>
    <name type="scientific">Neurospora crassa (strain ATCC 24698 / 74-OR23-1A / CBS 708.71 / DSM 1257 / FGSC 987)</name>
    <dbReference type="NCBI Taxonomy" id="367110"/>
    <lineage>
        <taxon>Eukaryota</taxon>
        <taxon>Fungi</taxon>
        <taxon>Dikarya</taxon>
        <taxon>Ascomycota</taxon>
        <taxon>Pezizomycotina</taxon>
        <taxon>Sordariomycetes</taxon>
        <taxon>Sordariomycetidae</taxon>
        <taxon>Sordariales</taxon>
        <taxon>Sordariaceae</taxon>
        <taxon>Neurospora</taxon>
    </lineage>
</organism>
<comment type="function">
    <text evidence="3">Required, together with mating-type protein A-3, for efficient ascospore formation.</text>
</comment>
<comment type="developmental stage">
    <text evidence="2">Only present in A-cells and in a/A diploid cells.</text>
</comment>
<comment type="similarity">
    <text evidence="4">To P.anserina SMR1.</text>
</comment>
<comment type="caution">
    <text evidence="4">It is uncertain whether Met-1 or Met-6 is the initiator.</text>
</comment>
<comment type="sequence caution" evidence="4">
    <conflict type="frameshift">
        <sequence resource="EMBL-CDS" id="AAC37477"/>
    </conflict>
</comment>
<comment type="sequence caution" evidence="4">
    <conflict type="erroneous initiation">
        <sequence resource="EMBL-CDS" id="EAA35087"/>
    </conflict>
    <text>Truncated N-terminus.</text>
</comment>
<name>MATC_NEUCR</name>